<keyword id="KW-0067">ATP-binding</keyword>
<keyword id="KW-0963">Cytoplasm</keyword>
<keyword id="KW-0460">Magnesium</keyword>
<keyword id="KW-0479">Metal-binding</keyword>
<keyword id="KW-0547">Nucleotide-binding</keyword>
<keyword id="KW-0554">One-carbon metabolism</keyword>
<keyword id="KW-0630">Potassium</keyword>
<keyword id="KW-1185">Reference proteome</keyword>
<keyword id="KW-0808">Transferase</keyword>
<accession>Q8CXS7</accession>
<dbReference type="EC" id="2.5.1.6" evidence="1"/>
<dbReference type="EMBL" id="AE010300">
    <property type="protein sequence ID" value="AAN49832.2"/>
    <property type="status" value="ALT_INIT"/>
    <property type="molecule type" value="Genomic_DNA"/>
</dbReference>
<dbReference type="RefSeq" id="NP_712814.3">
    <property type="nucleotide sequence ID" value="NC_004342.2"/>
</dbReference>
<dbReference type="RefSeq" id="WP_000053346.1">
    <property type="nucleotide sequence ID" value="NC_004342.2"/>
</dbReference>
<dbReference type="SMR" id="Q8CXS7"/>
<dbReference type="FunCoup" id="Q8CXS7">
    <property type="interactions" value="498"/>
</dbReference>
<dbReference type="STRING" id="189518.LA_2633"/>
<dbReference type="PaxDb" id="189518-LA_2633"/>
<dbReference type="EnsemblBacteria" id="AAN49832">
    <property type="protein sequence ID" value="AAN49832"/>
    <property type="gene ID" value="LA_2633"/>
</dbReference>
<dbReference type="GeneID" id="61144659"/>
<dbReference type="KEGG" id="lil:LA_2633"/>
<dbReference type="PATRIC" id="fig|189518.3.peg.2615"/>
<dbReference type="HOGENOM" id="CLU_041802_1_1_12"/>
<dbReference type="InParanoid" id="Q8CXS7"/>
<dbReference type="OrthoDB" id="9801686at2"/>
<dbReference type="UniPathway" id="UPA00315">
    <property type="reaction ID" value="UER00080"/>
</dbReference>
<dbReference type="Proteomes" id="UP000001408">
    <property type="component" value="Chromosome I"/>
</dbReference>
<dbReference type="GO" id="GO:0005829">
    <property type="term" value="C:cytosol"/>
    <property type="evidence" value="ECO:0000318"/>
    <property type="project" value="GO_Central"/>
</dbReference>
<dbReference type="GO" id="GO:0005524">
    <property type="term" value="F:ATP binding"/>
    <property type="evidence" value="ECO:0007669"/>
    <property type="project" value="UniProtKB-UniRule"/>
</dbReference>
<dbReference type="GO" id="GO:0000287">
    <property type="term" value="F:magnesium ion binding"/>
    <property type="evidence" value="ECO:0007669"/>
    <property type="project" value="UniProtKB-UniRule"/>
</dbReference>
<dbReference type="GO" id="GO:0004478">
    <property type="term" value="F:methionine adenosyltransferase activity"/>
    <property type="evidence" value="ECO:0000318"/>
    <property type="project" value="GO_Central"/>
</dbReference>
<dbReference type="GO" id="GO:0006730">
    <property type="term" value="P:one-carbon metabolic process"/>
    <property type="evidence" value="ECO:0007669"/>
    <property type="project" value="UniProtKB-KW"/>
</dbReference>
<dbReference type="GO" id="GO:0006556">
    <property type="term" value="P:S-adenosylmethionine biosynthetic process"/>
    <property type="evidence" value="ECO:0000318"/>
    <property type="project" value="GO_Central"/>
</dbReference>
<dbReference type="CDD" id="cd18079">
    <property type="entry name" value="S-AdoMet_synt"/>
    <property type="match status" value="1"/>
</dbReference>
<dbReference type="FunFam" id="3.30.300.10:FF:000003">
    <property type="entry name" value="S-adenosylmethionine synthase"/>
    <property type="match status" value="1"/>
</dbReference>
<dbReference type="Gene3D" id="3.30.300.10">
    <property type="match status" value="3"/>
</dbReference>
<dbReference type="HAMAP" id="MF_00086">
    <property type="entry name" value="S_AdoMet_synth1"/>
    <property type="match status" value="1"/>
</dbReference>
<dbReference type="InterPro" id="IPR022631">
    <property type="entry name" value="ADOMET_SYNTHASE_CS"/>
</dbReference>
<dbReference type="InterPro" id="IPR022630">
    <property type="entry name" value="S-AdoMet_synt_C"/>
</dbReference>
<dbReference type="InterPro" id="IPR022629">
    <property type="entry name" value="S-AdoMet_synt_central"/>
</dbReference>
<dbReference type="InterPro" id="IPR022628">
    <property type="entry name" value="S-AdoMet_synt_N"/>
</dbReference>
<dbReference type="InterPro" id="IPR002133">
    <property type="entry name" value="S-AdoMet_synthetase"/>
</dbReference>
<dbReference type="InterPro" id="IPR022636">
    <property type="entry name" value="S-AdoMet_synthetase_sfam"/>
</dbReference>
<dbReference type="NCBIfam" id="TIGR01034">
    <property type="entry name" value="metK"/>
    <property type="match status" value="1"/>
</dbReference>
<dbReference type="PANTHER" id="PTHR11964">
    <property type="entry name" value="S-ADENOSYLMETHIONINE SYNTHETASE"/>
    <property type="match status" value="1"/>
</dbReference>
<dbReference type="Pfam" id="PF02773">
    <property type="entry name" value="S-AdoMet_synt_C"/>
    <property type="match status" value="1"/>
</dbReference>
<dbReference type="Pfam" id="PF02772">
    <property type="entry name" value="S-AdoMet_synt_M"/>
    <property type="match status" value="1"/>
</dbReference>
<dbReference type="Pfam" id="PF00438">
    <property type="entry name" value="S-AdoMet_synt_N"/>
    <property type="match status" value="1"/>
</dbReference>
<dbReference type="PIRSF" id="PIRSF000497">
    <property type="entry name" value="MAT"/>
    <property type="match status" value="1"/>
</dbReference>
<dbReference type="SUPFAM" id="SSF55973">
    <property type="entry name" value="S-adenosylmethionine synthetase"/>
    <property type="match status" value="3"/>
</dbReference>
<dbReference type="PROSITE" id="PS00376">
    <property type="entry name" value="ADOMET_SYNTHASE_1"/>
    <property type="match status" value="1"/>
</dbReference>
<dbReference type="PROSITE" id="PS00377">
    <property type="entry name" value="ADOMET_SYNTHASE_2"/>
    <property type="match status" value="1"/>
</dbReference>
<comment type="function">
    <text evidence="1">Catalyzes the formation of S-adenosylmethionine (AdoMet) from methionine and ATP. The overall synthetic reaction is composed of two sequential steps, AdoMet formation and the subsequent tripolyphosphate hydrolysis which occurs prior to release of AdoMet from the enzyme.</text>
</comment>
<comment type="catalytic activity">
    <reaction evidence="1">
        <text>L-methionine + ATP + H2O = S-adenosyl-L-methionine + phosphate + diphosphate</text>
        <dbReference type="Rhea" id="RHEA:21080"/>
        <dbReference type="ChEBI" id="CHEBI:15377"/>
        <dbReference type="ChEBI" id="CHEBI:30616"/>
        <dbReference type="ChEBI" id="CHEBI:33019"/>
        <dbReference type="ChEBI" id="CHEBI:43474"/>
        <dbReference type="ChEBI" id="CHEBI:57844"/>
        <dbReference type="ChEBI" id="CHEBI:59789"/>
        <dbReference type="EC" id="2.5.1.6"/>
    </reaction>
</comment>
<comment type="cofactor">
    <cofactor evidence="1">
        <name>Mg(2+)</name>
        <dbReference type="ChEBI" id="CHEBI:18420"/>
    </cofactor>
    <text evidence="1">Binds 2 divalent ions per subunit.</text>
</comment>
<comment type="cofactor">
    <cofactor evidence="1">
        <name>K(+)</name>
        <dbReference type="ChEBI" id="CHEBI:29103"/>
    </cofactor>
    <text evidence="1">Binds 1 potassium ion per subunit.</text>
</comment>
<comment type="pathway">
    <text evidence="1">Amino-acid biosynthesis; S-adenosyl-L-methionine biosynthesis; S-adenosyl-L-methionine from L-methionine: step 1/1.</text>
</comment>
<comment type="subunit">
    <text evidence="1">Homotetramer; dimer of dimers.</text>
</comment>
<comment type="subcellular location">
    <subcellularLocation>
        <location evidence="1">Cytoplasm</location>
    </subcellularLocation>
</comment>
<comment type="similarity">
    <text evidence="1">Belongs to the AdoMet synthase family.</text>
</comment>
<comment type="sequence caution" evidence="2">
    <conflict type="erroneous initiation">
        <sequence resource="EMBL-CDS" id="AAN49832"/>
    </conflict>
    <text>Extended N-terminus.</text>
</comment>
<name>METK_LEPIN</name>
<proteinExistence type="inferred from homology"/>
<organism>
    <name type="scientific">Leptospira interrogans serogroup Icterohaemorrhagiae serovar Lai (strain 56601)</name>
    <dbReference type="NCBI Taxonomy" id="189518"/>
    <lineage>
        <taxon>Bacteria</taxon>
        <taxon>Pseudomonadati</taxon>
        <taxon>Spirochaetota</taxon>
        <taxon>Spirochaetia</taxon>
        <taxon>Leptospirales</taxon>
        <taxon>Leptospiraceae</taxon>
        <taxon>Leptospira</taxon>
    </lineage>
</organism>
<reference key="1">
    <citation type="journal article" date="2003" name="Nature">
        <title>Unique physiological and pathogenic features of Leptospira interrogans revealed by whole-genome sequencing.</title>
        <authorList>
            <person name="Ren S.-X."/>
            <person name="Fu G."/>
            <person name="Jiang X.-G."/>
            <person name="Zeng R."/>
            <person name="Miao Y.-G."/>
            <person name="Xu H."/>
            <person name="Zhang Y.-X."/>
            <person name="Xiong H."/>
            <person name="Lu G."/>
            <person name="Lu L.-F."/>
            <person name="Jiang H.-Q."/>
            <person name="Jia J."/>
            <person name="Tu Y.-F."/>
            <person name="Jiang J.-X."/>
            <person name="Gu W.-Y."/>
            <person name="Zhang Y.-Q."/>
            <person name="Cai Z."/>
            <person name="Sheng H.-H."/>
            <person name="Yin H.-F."/>
            <person name="Zhang Y."/>
            <person name="Zhu G.-F."/>
            <person name="Wan M."/>
            <person name="Huang H.-L."/>
            <person name="Qian Z."/>
            <person name="Wang S.-Y."/>
            <person name="Ma W."/>
            <person name="Yao Z.-J."/>
            <person name="Shen Y."/>
            <person name="Qiang B.-Q."/>
            <person name="Xia Q.-C."/>
            <person name="Guo X.-K."/>
            <person name="Danchin A."/>
            <person name="Saint Girons I."/>
            <person name="Somerville R.L."/>
            <person name="Wen Y.-M."/>
            <person name="Shi M.-H."/>
            <person name="Chen Z."/>
            <person name="Xu J.-G."/>
            <person name="Zhao G.-P."/>
        </authorList>
    </citation>
    <scope>NUCLEOTIDE SEQUENCE [LARGE SCALE GENOMIC DNA]</scope>
    <source>
        <strain>56601</strain>
    </source>
</reference>
<sequence>MSLKDFIFTSESVGEGHPDKVCDQISDAVLDAYLEQDPKSRVACETLVTTNLVVIAGEITSKGKVDAQEIARNVIRDIGYNDITMGFDADFAVVSAHVHAQSPDISQGVTEGEGLFKEQGAGDQGLMFGFAINETPELMPMPIYYSHELVKHLAGLRHGNKLKFLRPDAKSQVTVEYKDGKPVRIDTVVISTQHSPDVTHKQIEEALIEECIKKVIPANLLNNTKYFINPTGQFIIGGPHGDAGLTGRKIIVDTYGGYGRHGGGAFSGKDPSKVDRSAAYMGRYIAKNVVASGLADKCEVQLAYAIGVAEPVSVHVDTFGTGKISEEELVKRIRANFKLTPRGIIESLKLLEKGRKYRETASYGHFGRKGSTFTWEETDKASALKG</sequence>
<evidence type="ECO:0000255" key="1">
    <source>
        <dbReference type="HAMAP-Rule" id="MF_00086"/>
    </source>
</evidence>
<evidence type="ECO:0000305" key="2"/>
<gene>
    <name evidence="1" type="primary">metK</name>
    <name type="ordered locus">LA_2633</name>
</gene>
<protein>
    <recommendedName>
        <fullName evidence="1">S-adenosylmethionine synthase</fullName>
        <shortName evidence="1">AdoMet synthase</shortName>
        <ecNumber evidence="1">2.5.1.6</ecNumber>
    </recommendedName>
    <alternativeName>
        <fullName evidence="1">MAT</fullName>
    </alternativeName>
    <alternativeName>
        <fullName evidence="1">Methionine adenosyltransferase</fullName>
    </alternativeName>
</protein>
<feature type="chain" id="PRO_0000174542" description="S-adenosylmethionine synthase">
    <location>
        <begin position="1"/>
        <end position="386"/>
    </location>
</feature>
<feature type="region of interest" description="Flexible loop" evidence="1">
    <location>
        <begin position="101"/>
        <end position="111"/>
    </location>
</feature>
<feature type="binding site" description="in other chain" evidence="1">
    <location>
        <position position="17"/>
    </location>
    <ligand>
        <name>ATP</name>
        <dbReference type="ChEBI" id="CHEBI:30616"/>
        <note>ligand shared between two neighboring subunits</note>
    </ligand>
</feature>
<feature type="binding site" evidence="1">
    <location>
        <position position="19"/>
    </location>
    <ligand>
        <name>Mg(2+)</name>
        <dbReference type="ChEBI" id="CHEBI:18420"/>
    </ligand>
</feature>
<feature type="binding site" evidence="1">
    <location>
        <position position="45"/>
    </location>
    <ligand>
        <name>K(+)</name>
        <dbReference type="ChEBI" id="CHEBI:29103"/>
    </ligand>
</feature>
<feature type="binding site" description="in other chain" evidence="1">
    <location>
        <position position="58"/>
    </location>
    <ligand>
        <name>L-methionine</name>
        <dbReference type="ChEBI" id="CHEBI:57844"/>
        <note>ligand shared between two neighboring subunits</note>
    </ligand>
</feature>
<feature type="binding site" description="in other chain" evidence="1">
    <location>
        <position position="101"/>
    </location>
    <ligand>
        <name>L-methionine</name>
        <dbReference type="ChEBI" id="CHEBI:57844"/>
        <note>ligand shared between two neighboring subunits</note>
    </ligand>
</feature>
<feature type="binding site" description="in other chain" evidence="1">
    <location>
        <begin position="168"/>
        <end position="170"/>
    </location>
    <ligand>
        <name>ATP</name>
        <dbReference type="ChEBI" id="CHEBI:30616"/>
        <note>ligand shared between two neighboring subunits</note>
    </ligand>
</feature>
<feature type="binding site" evidence="1">
    <location>
        <position position="242"/>
    </location>
    <ligand>
        <name>ATP</name>
        <dbReference type="ChEBI" id="CHEBI:30616"/>
        <note>ligand shared between two neighboring subunits</note>
    </ligand>
</feature>
<feature type="binding site" evidence="1">
    <location>
        <position position="242"/>
    </location>
    <ligand>
        <name>L-methionine</name>
        <dbReference type="ChEBI" id="CHEBI:57844"/>
        <note>ligand shared between two neighboring subunits</note>
    </ligand>
</feature>
<feature type="binding site" description="in other chain" evidence="1">
    <location>
        <begin position="248"/>
        <end position="249"/>
    </location>
    <ligand>
        <name>ATP</name>
        <dbReference type="ChEBI" id="CHEBI:30616"/>
        <note>ligand shared between two neighboring subunits</note>
    </ligand>
</feature>
<feature type="binding site" evidence="1">
    <location>
        <position position="265"/>
    </location>
    <ligand>
        <name>ATP</name>
        <dbReference type="ChEBI" id="CHEBI:30616"/>
        <note>ligand shared between two neighboring subunits</note>
    </ligand>
</feature>
<feature type="binding site" evidence="1">
    <location>
        <position position="269"/>
    </location>
    <ligand>
        <name>ATP</name>
        <dbReference type="ChEBI" id="CHEBI:30616"/>
        <note>ligand shared between two neighboring subunits</note>
    </ligand>
</feature>
<feature type="binding site" description="in other chain" evidence="1">
    <location>
        <position position="273"/>
    </location>
    <ligand>
        <name>L-methionine</name>
        <dbReference type="ChEBI" id="CHEBI:57844"/>
        <note>ligand shared between two neighboring subunits</note>
    </ligand>
</feature>